<comment type="function">
    <text evidence="1">Produces ATP from ADP in the presence of a proton gradient across the membrane. The catalytic sites are hosted primarily by the beta subunits.</text>
</comment>
<comment type="catalytic activity">
    <reaction evidence="1">
        <text>ATP + H2O + 4 H(+)(in) = ADP + phosphate + 5 H(+)(out)</text>
        <dbReference type="Rhea" id="RHEA:57720"/>
        <dbReference type="ChEBI" id="CHEBI:15377"/>
        <dbReference type="ChEBI" id="CHEBI:15378"/>
        <dbReference type="ChEBI" id="CHEBI:30616"/>
        <dbReference type="ChEBI" id="CHEBI:43474"/>
        <dbReference type="ChEBI" id="CHEBI:456216"/>
        <dbReference type="EC" id="7.1.2.2"/>
    </reaction>
</comment>
<comment type="subunit">
    <text evidence="1">F-type ATPases have 2 components, CF(1) - the catalytic core - and CF(0) - the membrane proton channel. CF(1) has five subunits: alpha(3), beta(3), gamma(1), delta(1), epsilon(1). CF(0) has three main subunits: a(1), b(2) and c(9-12). The alpha and beta chains form an alternating ring which encloses part of the gamma chain. CF(1) is attached to CF(0) by a central stalk formed by the gamma and epsilon chains, while a peripheral stalk is formed by the delta and b chains.</text>
</comment>
<comment type="subcellular location">
    <subcellularLocation>
        <location evidence="1">Cell inner membrane</location>
        <topology evidence="1">Peripheral membrane protein</topology>
    </subcellularLocation>
</comment>
<comment type="similarity">
    <text evidence="1">Belongs to the ATPase alpha/beta chains family.</text>
</comment>
<name>ATPB_TOLAT</name>
<accession>C4LDW0</accession>
<feature type="chain" id="PRO_1000214836" description="ATP synthase subunit beta">
    <location>
        <begin position="1"/>
        <end position="462"/>
    </location>
</feature>
<feature type="binding site" evidence="1">
    <location>
        <begin position="152"/>
        <end position="159"/>
    </location>
    <ligand>
        <name>ATP</name>
        <dbReference type="ChEBI" id="CHEBI:30616"/>
    </ligand>
</feature>
<protein>
    <recommendedName>
        <fullName evidence="1">ATP synthase subunit beta</fullName>
        <ecNumber evidence="1">7.1.2.2</ecNumber>
    </recommendedName>
    <alternativeName>
        <fullName evidence="1">ATP synthase F1 sector subunit beta</fullName>
    </alternativeName>
    <alternativeName>
        <fullName evidence="1">F-ATPase subunit beta</fullName>
    </alternativeName>
</protein>
<evidence type="ECO:0000255" key="1">
    <source>
        <dbReference type="HAMAP-Rule" id="MF_01347"/>
    </source>
</evidence>
<proteinExistence type="inferred from homology"/>
<gene>
    <name evidence="1" type="primary">atpD</name>
    <name type="ordered locus">Tola_3133</name>
</gene>
<sequence length="462" mass="50059">MSNGIIVQVIGAVVDVQFPQDAVPKVYDALKIVSEGQSKGLVMEVQQQIGGGVVRCIAMGTSDGLRRGAEVSNTGEAIKVPVGMKTLGRIMNVLGEPVDEQGPIGAEDNWVIHREAPSYEDQSSATELLETGIKVIDLICPFAKGGKVGLFGGAGVGKTVNMMELINNIAKAHSGLSVFAGVGERTREGNDFYYEMKESNVLDKVAMVYGQMNEPPGNRLRVALTGLTMAEKFRDEGRDVLLFIDNIYRYTLAGTEVSALLGRMPSAVGYQPTLAEEMGVLQERITSTKTGSITSIQAVYVPADDLTDPSPATTFAHLDSTVTLSRQIAALGIYPAVDPLDSTSRQLDPLVVGQEHYETARGVQTVLQRYKELKDIIAILGMDELSEDDKLVVARARKIERFLSQPFNVAEVFTGSPGKYVTLKETIRGFKGILDGEYDDLPEQAFYMVGSIDEVVEKAKKL</sequence>
<dbReference type="EC" id="7.1.2.2" evidence="1"/>
<dbReference type="EMBL" id="CP001616">
    <property type="protein sequence ID" value="ACQ94721.1"/>
    <property type="molecule type" value="Genomic_DNA"/>
</dbReference>
<dbReference type="RefSeq" id="WP_015880170.1">
    <property type="nucleotide sequence ID" value="NC_012691.1"/>
</dbReference>
<dbReference type="SMR" id="C4LDW0"/>
<dbReference type="STRING" id="595494.Tola_3133"/>
<dbReference type="KEGG" id="tau:Tola_3133"/>
<dbReference type="eggNOG" id="COG0055">
    <property type="taxonomic scope" value="Bacteria"/>
</dbReference>
<dbReference type="HOGENOM" id="CLU_022398_0_2_6"/>
<dbReference type="OrthoDB" id="9801639at2"/>
<dbReference type="Proteomes" id="UP000009073">
    <property type="component" value="Chromosome"/>
</dbReference>
<dbReference type="GO" id="GO:0005886">
    <property type="term" value="C:plasma membrane"/>
    <property type="evidence" value="ECO:0007669"/>
    <property type="project" value="UniProtKB-SubCell"/>
</dbReference>
<dbReference type="GO" id="GO:0045259">
    <property type="term" value="C:proton-transporting ATP synthase complex"/>
    <property type="evidence" value="ECO:0007669"/>
    <property type="project" value="UniProtKB-KW"/>
</dbReference>
<dbReference type="GO" id="GO:0005524">
    <property type="term" value="F:ATP binding"/>
    <property type="evidence" value="ECO:0007669"/>
    <property type="project" value="UniProtKB-UniRule"/>
</dbReference>
<dbReference type="GO" id="GO:0016887">
    <property type="term" value="F:ATP hydrolysis activity"/>
    <property type="evidence" value="ECO:0007669"/>
    <property type="project" value="InterPro"/>
</dbReference>
<dbReference type="GO" id="GO:0046933">
    <property type="term" value="F:proton-transporting ATP synthase activity, rotational mechanism"/>
    <property type="evidence" value="ECO:0007669"/>
    <property type="project" value="UniProtKB-UniRule"/>
</dbReference>
<dbReference type="CDD" id="cd18110">
    <property type="entry name" value="ATP-synt_F1_beta_C"/>
    <property type="match status" value="1"/>
</dbReference>
<dbReference type="CDD" id="cd18115">
    <property type="entry name" value="ATP-synt_F1_beta_N"/>
    <property type="match status" value="1"/>
</dbReference>
<dbReference type="CDD" id="cd01133">
    <property type="entry name" value="F1-ATPase_beta_CD"/>
    <property type="match status" value="1"/>
</dbReference>
<dbReference type="FunFam" id="1.10.1140.10:FF:000001">
    <property type="entry name" value="ATP synthase subunit beta"/>
    <property type="match status" value="1"/>
</dbReference>
<dbReference type="FunFam" id="3.40.50.300:FF:000004">
    <property type="entry name" value="ATP synthase subunit beta"/>
    <property type="match status" value="1"/>
</dbReference>
<dbReference type="Gene3D" id="2.40.10.170">
    <property type="match status" value="1"/>
</dbReference>
<dbReference type="Gene3D" id="1.10.1140.10">
    <property type="entry name" value="Bovine Mitochondrial F1-atpase, Atp Synthase Beta Chain, Chain D, domain 3"/>
    <property type="match status" value="1"/>
</dbReference>
<dbReference type="Gene3D" id="3.40.50.300">
    <property type="entry name" value="P-loop containing nucleotide triphosphate hydrolases"/>
    <property type="match status" value="1"/>
</dbReference>
<dbReference type="HAMAP" id="MF_01347">
    <property type="entry name" value="ATP_synth_beta_bact"/>
    <property type="match status" value="1"/>
</dbReference>
<dbReference type="InterPro" id="IPR003593">
    <property type="entry name" value="AAA+_ATPase"/>
</dbReference>
<dbReference type="InterPro" id="IPR055190">
    <property type="entry name" value="ATP-synt_VA_C"/>
</dbReference>
<dbReference type="InterPro" id="IPR005722">
    <property type="entry name" value="ATP_synth_F1_bsu"/>
</dbReference>
<dbReference type="InterPro" id="IPR020003">
    <property type="entry name" value="ATPase_a/bsu_AS"/>
</dbReference>
<dbReference type="InterPro" id="IPR050053">
    <property type="entry name" value="ATPase_alpha/beta_chains"/>
</dbReference>
<dbReference type="InterPro" id="IPR004100">
    <property type="entry name" value="ATPase_F1/V1/A1_a/bsu_N"/>
</dbReference>
<dbReference type="InterPro" id="IPR036121">
    <property type="entry name" value="ATPase_F1/V1/A1_a/bsu_N_sf"/>
</dbReference>
<dbReference type="InterPro" id="IPR000194">
    <property type="entry name" value="ATPase_F1/V1/A1_a/bsu_nucl-bd"/>
</dbReference>
<dbReference type="InterPro" id="IPR024034">
    <property type="entry name" value="ATPase_F1/V1_b/a_C"/>
</dbReference>
<dbReference type="InterPro" id="IPR027417">
    <property type="entry name" value="P-loop_NTPase"/>
</dbReference>
<dbReference type="NCBIfam" id="TIGR01039">
    <property type="entry name" value="atpD"/>
    <property type="match status" value="1"/>
</dbReference>
<dbReference type="PANTHER" id="PTHR15184">
    <property type="entry name" value="ATP SYNTHASE"/>
    <property type="match status" value="1"/>
</dbReference>
<dbReference type="PANTHER" id="PTHR15184:SF71">
    <property type="entry name" value="ATP SYNTHASE SUBUNIT BETA, MITOCHONDRIAL"/>
    <property type="match status" value="1"/>
</dbReference>
<dbReference type="Pfam" id="PF00006">
    <property type="entry name" value="ATP-synt_ab"/>
    <property type="match status" value="1"/>
</dbReference>
<dbReference type="Pfam" id="PF02874">
    <property type="entry name" value="ATP-synt_ab_N"/>
    <property type="match status" value="1"/>
</dbReference>
<dbReference type="Pfam" id="PF22919">
    <property type="entry name" value="ATP-synt_VA_C"/>
    <property type="match status" value="1"/>
</dbReference>
<dbReference type="SMART" id="SM00382">
    <property type="entry name" value="AAA"/>
    <property type="match status" value="1"/>
</dbReference>
<dbReference type="SUPFAM" id="SSF47917">
    <property type="entry name" value="C-terminal domain of alpha and beta subunits of F1 ATP synthase"/>
    <property type="match status" value="1"/>
</dbReference>
<dbReference type="SUPFAM" id="SSF50615">
    <property type="entry name" value="N-terminal domain of alpha and beta subunits of F1 ATP synthase"/>
    <property type="match status" value="1"/>
</dbReference>
<dbReference type="SUPFAM" id="SSF52540">
    <property type="entry name" value="P-loop containing nucleoside triphosphate hydrolases"/>
    <property type="match status" value="1"/>
</dbReference>
<dbReference type="PROSITE" id="PS00152">
    <property type="entry name" value="ATPASE_ALPHA_BETA"/>
    <property type="match status" value="1"/>
</dbReference>
<reference key="1">
    <citation type="submission" date="2009-05" db="EMBL/GenBank/DDBJ databases">
        <title>Complete sequence of Tolumonas auensis DSM 9187.</title>
        <authorList>
            <consortium name="US DOE Joint Genome Institute"/>
            <person name="Lucas S."/>
            <person name="Copeland A."/>
            <person name="Lapidus A."/>
            <person name="Glavina del Rio T."/>
            <person name="Tice H."/>
            <person name="Bruce D."/>
            <person name="Goodwin L."/>
            <person name="Pitluck S."/>
            <person name="Chertkov O."/>
            <person name="Brettin T."/>
            <person name="Detter J.C."/>
            <person name="Han C."/>
            <person name="Larimer F."/>
            <person name="Land M."/>
            <person name="Hauser L."/>
            <person name="Kyrpides N."/>
            <person name="Mikhailova N."/>
            <person name="Spring S."/>
            <person name="Beller H."/>
        </authorList>
    </citation>
    <scope>NUCLEOTIDE SEQUENCE [LARGE SCALE GENOMIC DNA]</scope>
    <source>
        <strain>DSM 9187 / NBRC 110442 / TA 4</strain>
    </source>
</reference>
<keyword id="KW-0066">ATP synthesis</keyword>
<keyword id="KW-0067">ATP-binding</keyword>
<keyword id="KW-0997">Cell inner membrane</keyword>
<keyword id="KW-1003">Cell membrane</keyword>
<keyword id="KW-0139">CF(1)</keyword>
<keyword id="KW-0375">Hydrogen ion transport</keyword>
<keyword id="KW-0406">Ion transport</keyword>
<keyword id="KW-0472">Membrane</keyword>
<keyword id="KW-0547">Nucleotide-binding</keyword>
<keyword id="KW-1185">Reference proteome</keyword>
<keyword id="KW-1278">Translocase</keyword>
<keyword id="KW-0813">Transport</keyword>
<organism>
    <name type="scientific">Tolumonas auensis (strain DSM 9187 / NBRC 110442 / TA 4)</name>
    <dbReference type="NCBI Taxonomy" id="595494"/>
    <lineage>
        <taxon>Bacteria</taxon>
        <taxon>Pseudomonadati</taxon>
        <taxon>Pseudomonadota</taxon>
        <taxon>Gammaproteobacteria</taxon>
        <taxon>Aeromonadales</taxon>
        <taxon>Aeromonadaceae</taxon>
        <taxon>Tolumonas</taxon>
    </lineage>
</organism>